<keyword id="KW-0687">Ribonucleoprotein</keyword>
<keyword id="KW-0689">Ribosomal protein</keyword>
<reference key="1">
    <citation type="journal article" date="2011" name="J. Bacteriol.">
        <title>Comparative genomics of 28 Salmonella enterica isolates: evidence for CRISPR-mediated adaptive sublineage evolution.</title>
        <authorList>
            <person name="Fricke W.F."/>
            <person name="Mammel M.K."/>
            <person name="McDermott P.F."/>
            <person name="Tartera C."/>
            <person name="White D.G."/>
            <person name="Leclerc J.E."/>
            <person name="Ravel J."/>
            <person name="Cebula T.A."/>
        </authorList>
    </citation>
    <scope>NUCLEOTIDE SEQUENCE [LARGE SCALE GENOMIC DNA]</scope>
    <source>
        <strain>SL476</strain>
    </source>
</reference>
<name>RS21_SALHS</name>
<protein>
    <recommendedName>
        <fullName evidence="1">Small ribosomal subunit protein bS21</fullName>
    </recommendedName>
    <alternativeName>
        <fullName evidence="3">30S ribosomal protein S21</fullName>
    </alternativeName>
</protein>
<gene>
    <name evidence="1" type="primary">rpsU</name>
    <name type="ordered locus">SeHA_C3463</name>
</gene>
<accession>B4TI60</accession>
<comment type="similarity">
    <text evidence="1">Belongs to the bacterial ribosomal protein bS21 family.</text>
</comment>
<proteinExistence type="inferred from homology"/>
<feature type="chain" id="PRO_1000120658" description="Small ribosomal subunit protein bS21">
    <location>
        <begin position="1"/>
        <end position="71"/>
    </location>
</feature>
<feature type="region of interest" description="Disordered" evidence="2">
    <location>
        <begin position="43"/>
        <end position="71"/>
    </location>
</feature>
<feature type="compositionally biased region" description="Basic residues" evidence="2">
    <location>
        <begin position="46"/>
        <end position="59"/>
    </location>
</feature>
<feature type="compositionally biased region" description="Basic and acidic residues" evidence="2">
    <location>
        <begin position="60"/>
        <end position="71"/>
    </location>
</feature>
<dbReference type="EMBL" id="CP001120">
    <property type="protein sequence ID" value="ACF66685.1"/>
    <property type="molecule type" value="Genomic_DNA"/>
</dbReference>
<dbReference type="RefSeq" id="WP_001144069.1">
    <property type="nucleotide sequence ID" value="NC_011083.1"/>
</dbReference>
<dbReference type="SMR" id="B4TI60"/>
<dbReference type="GeneID" id="98390195"/>
<dbReference type="KEGG" id="seh:SeHA_C3463"/>
<dbReference type="HOGENOM" id="CLU_159258_1_0_6"/>
<dbReference type="Proteomes" id="UP000001866">
    <property type="component" value="Chromosome"/>
</dbReference>
<dbReference type="GO" id="GO:1990904">
    <property type="term" value="C:ribonucleoprotein complex"/>
    <property type="evidence" value="ECO:0007669"/>
    <property type="project" value="UniProtKB-KW"/>
</dbReference>
<dbReference type="GO" id="GO:0005840">
    <property type="term" value="C:ribosome"/>
    <property type="evidence" value="ECO:0007669"/>
    <property type="project" value="UniProtKB-KW"/>
</dbReference>
<dbReference type="GO" id="GO:0003735">
    <property type="term" value="F:structural constituent of ribosome"/>
    <property type="evidence" value="ECO:0007669"/>
    <property type="project" value="InterPro"/>
</dbReference>
<dbReference type="GO" id="GO:0006412">
    <property type="term" value="P:translation"/>
    <property type="evidence" value="ECO:0007669"/>
    <property type="project" value="UniProtKB-UniRule"/>
</dbReference>
<dbReference type="FunFam" id="1.20.5.1150:FF:000001">
    <property type="entry name" value="30S ribosomal protein S21"/>
    <property type="match status" value="1"/>
</dbReference>
<dbReference type="Gene3D" id="1.20.5.1150">
    <property type="entry name" value="Ribosomal protein S8"/>
    <property type="match status" value="1"/>
</dbReference>
<dbReference type="HAMAP" id="MF_00358">
    <property type="entry name" value="Ribosomal_bS21"/>
    <property type="match status" value="1"/>
</dbReference>
<dbReference type="InterPro" id="IPR001911">
    <property type="entry name" value="Ribosomal_bS21"/>
</dbReference>
<dbReference type="InterPro" id="IPR018278">
    <property type="entry name" value="Ribosomal_bS21_CS"/>
</dbReference>
<dbReference type="InterPro" id="IPR038380">
    <property type="entry name" value="Ribosomal_bS21_sf"/>
</dbReference>
<dbReference type="NCBIfam" id="TIGR00030">
    <property type="entry name" value="S21p"/>
    <property type="match status" value="1"/>
</dbReference>
<dbReference type="PANTHER" id="PTHR21109">
    <property type="entry name" value="MITOCHONDRIAL 28S RIBOSOMAL PROTEIN S21"/>
    <property type="match status" value="1"/>
</dbReference>
<dbReference type="PANTHER" id="PTHR21109:SF22">
    <property type="entry name" value="SMALL RIBOSOMAL SUBUNIT PROTEIN BS21"/>
    <property type="match status" value="1"/>
</dbReference>
<dbReference type="Pfam" id="PF01165">
    <property type="entry name" value="Ribosomal_S21"/>
    <property type="match status" value="1"/>
</dbReference>
<dbReference type="PRINTS" id="PR00976">
    <property type="entry name" value="RIBOSOMALS21"/>
</dbReference>
<dbReference type="PROSITE" id="PS01181">
    <property type="entry name" value="RIBOSOMAL_S21"/>
    <property type="match status" value="1"/>
</dbReference>
<sequence length="71" mass="8500">MPVIKVRENEPFDVALRRFKRSCEKAGVLAEVRRREFYEKPTTERKRAKASAVKRHAKKLARENARRTRLY</sequence>
<organism>
    <name type="scientific">Salmonella heidelberg (strain SL476)</name>
    <dbReference type="NCBI Taxonomy" id="454169"/>
    <lineage>
        <taxon>Bacteria</taxon>
        <taxon>Pseudomonadati</taxon>
        <taxon>Pseudomonadota</taxon>
        <taxon>Gammaproteobacteria</taxon>
        <taxon>Enterobacterales</taxon>
        <taxon>Enterobacteriaceae</taxon>
        <taxon>Salmonella</taxon>
    </lineage>
</organism>
<evidence type="ECO:0000255" key="1">
    <source>
        <dbReference type="HAMAP-Rule" id="MF_00358"/>
    </source>
</evidence>
<evidence type="ECO:0000256" key="2">
    <source>
        <dbReference type="SAM" id="MobiDB-lite"/>
    </source>
</evidence>
<evidence type="ECO:0000305" key="3"/>